<keyword id="KW-0062">Aspartic protease inhibitor</keyword>
<keyword id="KW-1015">Disulfide bond</keyword>
<keyword id="KW-0646">Protease inhibitor</keyword>
<keyword id="KW-0964">Secreted</keyword>
<keyword id="KW-0732">Signal</keyword>
<dbReference type="EMBL" id="AF277291">
    <property type="protein sequence ID" value="AAG50205.1"/>
    <property type="molecule type" value="mRNA"/>
</dbReference>
<dbReference type="SMR" id="Q9BN10"/>
<dbReference type="MEROPS" id="I33.002"/>
<dbReference type="OrthoDB" id="5828355at2759"/>
<dbReference type="GO" id="GO:0005576">
    <property type="term" value="C:extracellular region"/>
    <property type="evidence" value="ECO:0007669"/>
    <property type="project" value="UniProtKB-SubCell"/>
</dbReference>
<dbReference type="GO" id="GO:0019828">
    <property type="term" value="F:aspartic-type endopeptidase inhibitor activity"/>
    <property type="evidence" value="ECO:0007669"/>
    <property type="project" value="UniProtKB-KW"/>
</dbReference>
<dbReference type="CDD" id="cd00225">
    <property type="entry name" value="API3"/>
    <property type="match status" value="1"/>
</dbReference>
<dbReference type="Gene3D" id="3.30.1120.50">
    <property type="entry name" value="Pepsin inhibitor-3"/>
    <property type="match status" value="2"/>
</dbReference>
<dbReference type="InterPro" id="IPR010480">
    <property type="entry name" value="Pepsin-I3"/>
</dbReference>
<dbReference type="InterPro" id="IPR038412">
    <property type="entry name" value="Pepsin-I3_sf"/>
</dbReference>
<dbReference type="InterPro" id="IPR051901">
    <property type="entry name" value="Protease_Inhibitor_I33"/>
</dbReference>
<dbReference type="PANTHER" id="PTHR37969">
    <property type="entry name" value="PROTEIN CBG07421-RELATED"/>
    <property type="match status" value="1"/>
</dbReference>
<dbReference type="PANTHER" id="PTHR37969:SF1">
    <property type="entry name" value="PROTEIN CBG13105"/>
    <property type="match status" value="1"/>
</dbReference>
<dbReference type="Pfam" id="PF06394">
    <property type="entry name" value="Pepsin-I3"/>
    <property type="match status" value="2"/>
</dbReference>
<dbReference type="SUPFAM" id="SSF55149">
    <property type="entry name" value="Pepsin inhibitor-3"/>
    <property type="match status" value="1"/>
</dbReference>
<comment type="function">
    <text evidence="5">Aspartyl protease inhibitor.</text>
</comment>
<comment type="subcellular location">
    <subcellularLocation>
        <location evidence="5">Secreted</location>
    </subcellularLocation>
</comment>
<comment type="developmental stage">
    <text evidence="4">Expressed in L1, L3, and adult male and female worms.</text>
</comment>
<comment type="similarity">
    <text evidence="5">Belongs to the protease inhibitor I33 family.</text>
</comment>
<accession>Q9BN10</accession>
<reference key="1">
    <citation type="journal article" date="2002" name="Clin. Diagn. Lab. Immunol.">
        <title>An aspartyl protease inhibitor orthologue expressed by Parelaphostrongylus tenuis is immunogenic in an atypical host.</title>
        <authorList>
            <person name="Duffy M.S."/>
            <person name="MacAfee N.E.A."/>
            <person name="Burt M.D.B."/>
            <person name="Appleton J.A."/>
        </authorList>
    </citation>
    <scope>NUCLEOTIDE SEQUENCE [MRNA]</scope>
    <scope>DEVELOPMENTAL STAGE</scope>
</reference>
<name>API_PARTN</name>
<evidence type="ECO:0000250" key="1"/>
<evidence type="ECO:0000255" key="2"/>
<evidence type="ECO:0000256" key="3">
    <source>
        <dbReference type="SAM" id="MobiDB-lite"/>
    </source>
</evidence>
<evidence type="ECO:0000269" key="4">
    <source>
    </source>
</evidence>
<evidence type="ECO:0000305" key="5"/>
<organism>
    <name type="scientific">Parelaphostrongylus tenuis</name>
    <name type="common">Meningeal worm</name>
    <dbReference type="NCBI Taxonomy" id="148309"/>
    <lineage>
        <taxon>Eukaryota</taxon>
        <taxon>Metazoa</taxon>
        <taxon>Ecdysozoa</taxon>
        <taxon>Nematoda</taxon>
        <taxon>Chromadorea</taxon>
        <taxon>Rhabditida</taxon>
        <taxon>Rhabditina</taxon>
        <taxon>Rhabditomorpha</taxon>
        <taxon>Strongyloidea</taxon>
        <taxon>Metastrongylidae</taxon>
        <taxon>Parelaphostrongylus</taxon>
    </lineage>
</organism>
<proteinExistence type="evidence at transcript level"/>
<protein>
    <recommendedName>
        <fullName>Aspartyl protease inhibitor</fullName>
    </recommendedName>
    <alternativeName>
        <fullName>Pt-API-1</fullName>
    </alternativeName>
</protein>
<feature type="signal peptide" evidence="2">
    <location>
        <begin position="1"/>
        <end position="15"/>
    </location>
</feature>
<feature type="chain" id="PRO_0000002399" description="Aspartyl protease inhibitor">
    <location>
        <begin position="16"/>
        <end position="226"/>
    </location>
</feature>
<feature type="region of interest" description="Disordered" evidence="3">
    <location>
        <begin position="95"/>
        <end position="116"/>
    </location>
</feature>
<feature type="region of interest" description="Disordered" evidence="3">
    <location>
        <begin position="196"/>
        <end position="218"/>
    </location>
</feature>
<feature type="disulfide bond" evidence="1">
    <location>
        <begin position="131"/>
        <end position="222"/>
    </location>
</feature>
<sequence>MKLLFLCALIALTAAAPRQKRLTVGTIAVSGGAGGSTGCVVTGNVLYANGFKLRELTPIEQQELQDYQNKVADYKATLKQAVKERQEKLKARLAGKKGKAVETSSEELPKAPKKPSFCSPDDTTQFYFDGCMVQNNRVYVGNTYARDLTPSEIEELKVFEKKQTVYQDYIQKQVQQQVSNLFGSSDFFSSFFGGGEAKQTTTTEAPELPEEAPEQPNVPNFCTPIY</sequence>